<sequence length="751" mass="73172">MVAERTRKAAASGSRGPGELGAPGPGTVALAEQCARLPSPGCCGLLALALCSLALSLLAHFRTAELQARVLRLEAERGEQQMEKAILGRVNQLLDEKWKFYSRRRREAPKMSPGCNCPPGPPGPTGRPGLPGDKGAIGMPGRVGIKGQPGEKGAPGDAGMSIVGPRGPPGQPGTRGFPGFPGPIGLDGRPGHPGPKGEMGLVGPRGQPGPQGQKGEKGQCGEYPHREYPGGMLAALRSNPIMSLKLLPLLNSVRLAPPPVIKRRTFQGEQSQTGIQGPPGPPGPPGPSGPLGHPGLPGPIGPPGLPGPPGPKGDPGIQGYHGRKGERGMPGMPGKHGAKGVPGIAVAGMKGEPGTPGTKGEKGAAGSPGLLGQKGEKGDAGNAIGGGRGEPGPPGLPGPPGPKGEAGVDGQAGPPGQQGDKGQPGAAGEQGPSGPKGAKGEPGKGEMVDYNGSINEALQEIRTLALMGPPGLPGQTGPPGPPGTPGQRGEIGLPGPPGHDGDKGPRGKPGDMGPAGPQGPPGKDGPPGMKGEVGPPGSPGEKGETGQAGPQGLDGPTGEKGEPGDEGRPGATGLPGPIGLPGFTGEKGEAGEKGDPGAEVPGPPGPEGPPGPPGLQGFPGPKGEAGLEGSKGEKGSQGEKGDRGPLGLPGASGLDGRPGPPGTPGPIGVPGPAGPKGERGSKGDPGMTGPTGAAGLPGLHGPPGDKGNRGERGKKGSRGPKGDKGDQGAPGLDAPCPLGEDGLPVQGCWNK</sequence>
<keyword id="KW-0025">Alternative splicing</keyword>
<keyword id="KW-0130">Cell adhesion</keyword>
<keyword id="KW-1003">Cell membrane</keyword>
<keyword id="KW-0176">Collagen</keyword>
<keyword id="KW-0217">Developmental protein</keyword>
<keyword id="KW-0221">Differentiation</keyword>
<keyword id="KW-1015">Disulfide bond</keyword>
<keyword id="KW-0325">Glycoprotein</keyword>
<keyword id="KW-0358">Heparin-binding</keyword>
<keyword id="KW-0472">Membrane</keyword>
<keyword id="KW-0892">Osteogenesis</keyword>
<keyword id="KW-0628">Postsynaptic cell membrane</keyword>
<keyword id="KW-1185">Reference proteome</keyword>
<keyword id="KW-0735">Signal-anchor</keyword>
<keyword id="KW-0770">Synapse</keyword>
<keyword id="KW-0812">Transmembrane</keyword>
<keyword id="KW-1133">Transmembrane helix</keyword>
<accession>Q9R1N9</accession>
<accession>O70575</accession>
<name>CODA1_MOUSE</name>
<organism>
    <name type="scientific">Mus musculus</name>
    <name type="common">Mouse</name>
    <dbReference type="NCBI Taxonomy" id="10090"/>
    <lineage>
        <taxon>Eukaryota</taxon>
        <taxon>Metazoa</taxon>
        <taxon>Chordata</taxon>
        <taxon>Craniata</taxon>
        <taxon>Vertebrata</taxon>
        <taxon>Euteleostomi</taxon>
        <taxon>Mammalia</taxon>
        <taxon>Eutheria</taxon>
        <taxon>Euarchontoglires</taxon>
        <taxon>Glires</taxon>
        <taxon>Rodentia</taxon>
        <taxon>Myomorpha</taxon>
        <taxon>Muroidea</taxon>
        <taxon>Muridae</taxon>
        <taxon>Murinae</taxon>
        <taxon>Mus</taxon>
        <taxon>Mus</taxon>
    </lineage>
</organism>
<feature type="chain" id="PRO_0000284680" description="Collagen alpha-1(XIII) chain">
    <location>
        <begin position="1"/>
        <end position="751"/>
    </location>
</feature>
<feature type="topological domain" description="Cytoplasmic" evidence="3">
    <location>
        <begin position="1"/>
        <end position="40"/>
    </location>
</feature>
<feature type="transmembrane region" description="Helical; Signal-anchor for type II membrane protein" evidence="3">
    <location>
        <begin position="41"/>
        <end position="59"/>
    </location>
</feature>
<feature type="topological domain" description="Extracellular" evidence="3">
    <location>
        <begin position="60"/>
        <end position="751"/>
    </location>
</feature>
<feature type="region of interest" description="Nonhelical region 1 (NC1)" evidence="3">
    <location>
        <begin position="1"/>
        <end position="119"/>
    </location>
</feature>
<feature type="region of interest" description="Disordered" evidence="4">
    <location>
        <begin position="1"/>
        <end position="24"/>
    </location>
</feature>
<feature type="region of interest" description="Disordered" evidence="4">
    <location>
        <begin position="108"/>
        <end position="127"/>
    </location>
</feature>
<feature type="region of interest" description="Triple-helical region 1 (COL1)" evidence="3">
    <location>
        <begin position="120"/>
        <end position="223"/>
    </location>
</feature>
<feature type="region of interest" description="Disordered" evidence="4">
    <location>
        <begin position="190"/>
        <end position="225"/>
    </location>
</feature>
<feature type="region of interest" description="Nonhelical region 2 (NC2)" evidence="3">
    <location>
        <begin position="224"/>
        <end position="273"/>
    </location>
</feature>
<feature type="region of interest" description="Disordered" evidence="4">
    <location>
        <begin position="265"/>
        <end position="449"/>
    </location>
</feature>
<feature type="region of interest" description="Triple-helical region 2 (COL2)" evidence="3">
    <location>
        <begin position="274"/>
        <end position="445"/>
    </location>
</feature>
<feature type="region of interest" description="Nonhelical region 3 (NC3)" evidence="3">
    <location>
        <begin position="446"/>
        <end position="467"/>
    </location>
</feature>
<feature type="region of interest" description="Disordered" evidence="4">
    <location>
        <begin position="466"/>
        <end position="751"/>
    </location>
</feature>
<feature type="region of interest" description="Triple-helical region 3 (COL3)" evidence="3">
    <location>
        <begin position="468"/>
        <end position="733"/>
    </location>
</feature>
<feature type="region of interest" description="Nonhelical region 4 (NC4)" evidence="3">
    <location>
        <begin position="734"/>
        <end position="751"/>
    </location>
</feature>
<feature type="compositionally biased region" description="Gly residues" evidence="4">
    <location>
        <begin position="15"/>
        <end position="24"/>
    </location>
</feature>
<feature type="compositionally biased region" description="Pro residues" evidence="4">
    <location>
        <begin position="116"/>
        <end position="125"/>
    </location>
</feature>
<feature type="compositionally biased region" description="Low complexity" evidence="4">
    <location>
        <begin position="204"/>
        <end position="213"/>
    </location>
</feature>
<feature type="compositionally biased region" description="Basic and acidic residues" evidence="4">
    <location>
        <begin position="214"/>
        <end position="225"/>
    </location>
</feature>
<feature type="compositionally biased region" description="Pro residues" evidence="4">
    <location>
        <begin position="278"/>
        <end position="288"/>
    </location>
</feature>
<feature type="compositionally biased region" description="Pro residues" evidence="4">
    <location>
        <begin position="296"/>
        <end position="312"/>
    </location>
</feature>
<feature type="compositionally biased region" description="Pro residues" evidence="4">
    <location>
        <begin position="391"/>
        <end position="402"/>
    </location>
</feature>
<feature type="compositionally biased region" description="Low complexity" evidence="4">
    <location>
        <begin position="403"/>
        <end position="436"/>
    </location>
</feature>
<feature type="compositionally biased region" description="Basic and acidic residues" evidence="4">
    <location>
        <begin position="438"/>
        <end position="447"/>
    </location>
</feature>
<feature type="compositionally biased region" description="Pro residues" evidence="4">
    <location>
        <begin position="470"/>
        <end position="484"/>
    </location>
</feature>
<feature type="compositionally biased region" description="Basic and acidic residues" evidence="4">
    <location>
        <begin position="499"/>
        <end position="509"/>
    </location>
</feature>
<feature type="compositionally biased region" description="Basic and acidic residues" evidence="4">
    <location>
        <begin position="557"/>
        <end position="568"/>
    </location>
</feature>
<feature type="compositionally biased region" description="Basic and acidic residues" evidence="4">
    <location>
        <begin position="586"/>
        <end position="596"/>
    </location>
</feature>
<feature type="compositionally biased region" description="Pro residues" evidence="4">
    <location>
        <begin position="601"/>
        <end position="613"/>
    </location>
</feature>
<feature type="compositionally biased region" description="Low complexity" evidence="4">
    <location>
        <begin position="615"/>
        <end position="628"/>
    </location>
</feature>
<feature type="compositionally biased region" description="Basic and acidic residues" evidence="4">
    <location>
        <begin position="630"/>
        <end position="643"/>
    </location>
</feature>
<feature type="compositionally biased region" description="Pro residues" evidence="4">
    <location>
        <begin position="658"/>
        <end position="673"/>
    </location>
</feature>
<feature type="compositionally biased region" description="Low complexity" evidence="4">
    <location>
        <begin position="684"/>
        <end position="699"/>
    </location>
</feature>
<feature type="compositionally biased region" description="Basic and acidic residues" evidence="4">
    <location>
        <begin position="706"/>
        <end position="726"/>
    </location>
</feature>
<feature type="glycosylation site" description="N-linked (GlcNAc...) asparagine" evidence="3">
    <location>
        <position position="451"/>
    </location>
</feature>
<feature type="splice variant" id="VSP_052388" description="In isoform 2." evidence="12">
    <location>
        <begin position="651"/>
        <end position="662"/>
    </location>
</feature>
<gene>
    <name evidence="16" type="primary">Col13a1</name>
</gene>
<comment type="function">
    <text evidence="2 7 8 9 10">Involved in cell-matrix and cell-cell adhesion interactions that are required for normal development. May participate in the linkage between muscle fiber and basement membrane. May play a role in endochondral ossification of bone and branching morphogenesis of lung. Binds heparin. At neuromuscular junctions, may play a role in acetylcholine receptor clustering (PubMed:26626625).</text>
</comment>
<comment type="subunit">
    <text evidence="1">Homotrimer; disulfide-linked. Nucleation of the type XIII collagen triple helix is likely to occur at the N-terminal region with triple helix formation proceeding from the N- to the C-terminus. Interacts with FN1, perlecan/HSPG2 and NID2 (By similarity).</text>
</comment>
<comment type="subcellular location">
    <subcellularLocation>
        <location evidence="11">Cell membrane</location>
        <topology evidence="11">Single-pass type II membrane protein</topology>
    </subcellularLocation>
    <subcellularLocation>
        <location evidence="2">Postsynaptic cell membrane</location>
    </subcellularLocation>
</comment>
<comment type="alternative products">
    <event type="alternative splicing"/>
    <isoform>
        <id>Q9R1N9-1</id>
        <name evidence="5">1</name>
        <sequence type="displayed"/>
    </isoform>
    <isoform>
        <id>Q9R1N9-2</id>
        <name evidence="11">2</name>
        <sequence type="described" ref="VSP_052388"/>
    </isoform>
    <text evidence="13">Additional isoforms may exist.</text>
</comment>
<comment type="developmental stage">
    <text evidence="6">Expression levels remain fairly constant during early fetal development. This is followed by a marked increase of expression levels during the final stages of organogenesis, with initiation of the rapid fetal growth phase before birth. At mid-gestation, strongly expressed in the central and peripheral nervous systems. Also strongly expressed in developing heart, with localization to cell-cell contacts and accentuated in intercalated disks perinatally. During late fetal development, expressed in many tissues including cartilage, bone, skeletal muscle, lung, intestine and skin. Not detected in endothelia of most blood vessels or the endocardium of the heart.</text>
</comment>
<comment type="miscellaneous">
    <text evidence="7 8">Transgenic mice overexpressing COL13A1 with a 90 amino acid in-frame deletion of the COL2 sequence show embryonic lethality due either to a lack of placental formation or to cardiovascular defects in offspring from heterozygous mating. In contrast, transgenic mice expressing an N-terminally altered COL13A1 lacking both cytosolic and transmembrane domains while retaining the collagenous ectodomain are viable and fertile, but display progressive muscular myopathy.</text>
</comment>
<dbReference type="EMBL" id="U30292">
    <property type="protein sequence ID" value="AAC24314.1"/>
    <property type="molecule type" value="mRNA"/>
</dbReference>
<dbReference type="EMBL" id="AF063693">
    <property type="protein sequence ID" value="AAD50327.1"/>
    <property type="molecule type" value="Genomic_DNA"/>
</dbReference>
<dbReference type="EMBL" id="AF063666">
    <property type="protein sequence ID" value="AAD50327.1"/>
    <property type="status" value="JOINED"/>
    <property type="molecule type" value="Genomic_DNA"/>
</dbReference>
<dbReference type="EMBL" id="AF063667">
    <property type="protein sequence ID" value="AAD50327.1"/>
    <property type="status" value="JOINED"/>
    <property type="molecule type" value="Genomic_DNA"/>
</dbReference>
<dbReference type="EMBL" id="AF063668">
    <property type="protein sequence ID" value="AAD50327.1"/>
    <property type="status" value="JOINED"/>
    <property type="molecule type" value="Genomic_DNA"/>
</dbReference>
<dbReference type="EMBL" id="AF063669">
    <property type="protein sequence ID" value="AAD50327.1"/>
    <property type="status" value="JOINED"/>
    <property type="molecule type" value="Genomic_DNA"/>
</dbReference>
<dbReference type="EMBL" id="AF063670">
    <property type="protein sequence ID" value="AAD50327.1"/>
    <property type="status" value="JOINED"/>
    <property type="molecule type" value="Genomic_DNA"/>
</dbReference>
<dbReference type="EMBL" id="AF063671">
    <property type="protein sequence ID" value="AAD50327.1"/>
    <property type="status" value="JOINED"/>
    <property type="molecule type" value="Genomic_DNA"/>
</dbReference>
<dbReference type="EMBL" id="AF063672">
    <property type="protein sequence ID" value="AAD50327.1"/>
    <property type="status" value="JOINED"/>
    <property type="molecule type" value="Genomic_DNA"/>
</dbReference>
<dbReference type="EMBL" id="AF063673">
    <property type="protein sequence ID" value="AAD50327.1"/>
    <property type="status" value="JOINED"/>
    <property type="molecule type" value="Genomic_DNA"/>
</dbReference>
<dbReference type="EMBL" id="AF063674">
    <property type="protein sequence ID" value="AAD50327.1"/>
    <property type="status" value="JOINED"/>
    <property type="molecule type" value="Genomic_DNA"/>
</dbReference>
<dbReference type="EMBL" id="AF063675">
    <property type="protein sequence ID" value="AAD50327.1"/>
    <property type="status" value="JOINED"/>
    <property type="molecule type" value="Genomic_DNA"/>
</dbReference>
<dbReference type="EMBL" id="AF063676">
    <property type="protein sequence ID" value="AAD50327.1"/>
    <property type="status" value="JOINED"/>
    <property type="molecule type" value="Genomic_DNA"/>
</dbReference>
<dbReference type="EMBL" id="AF063677">
    <property type="protein sequence ID" value="AAD50327.1"/>
    <property type="status" value="JOINED"/>
    <property type="molecule type" value="Genomic_DNA"/>
</dbReference>
<dbReference type="EMBL" id="AF063678">
    <property type="protein sequence ID" value="AAD50327.1"/>
    <property type="status" value="JOINED"/>
    <property type="molecule type" value="Genomic_DNA"/>
</dbReference>
<dbReference type="EMBL" id="AF063679">
    <property type="protein sequence ID" value="AAD50327.1"/>
    <property type="status" value="JOINED"/>
    <property type="molecule type" value="Genomic_DNA"/>
</dbReference>
<dbReference type="EMBL" id="AF063680">
    <property type="protein sequence ID" value="AAD50327.1"/>
    <property type="status" value="JOINED"/>
    <property type="molecule type" value="Genomic_DNA"/>
</dbReference>
<dbReference type="EMBL" id="AF063681">
    <property type="protein sequence ID" value="AAD50327.1"/>
    <property type="status" value="JOINED"/>
    <property type="molecule type" value="Genomic_DNA"/>
</dbReference>
<dbReference type="EMBL" id="AF063682">
    <property type="protein sequence ID" value="AAD50327.1"/>
    <property type="status" value="JOINED"/>
    <property type="molecule type" value="Genomic_DNA"/>
</dbReference>
<dbReference type="EMBL" id="AF063683">
    <property type="protein sequence ID" value="AAD50327.1"/>
    <property type="status" value="JOINED"/>
    <property type="molecule type" value="Genomic_DNA"/>
</dbReference>
<dbReference type="EMBL" id="AF063684">
    <property type="protein sequence ID" value="AAD50327.1"/>
    <property type="status" value="JOINED"/>
    <property type="molecule type" value="Genomic_DNA"/>
</dbReference>
<dbReference type="EMBL" id="AF063685">
    <property type="protein sequence ID" value="AAD50327.1"/>
    <property type="status" value="JOINED"/>
    <property type="molecule type" value="Genomic_DNA"/>
</dbReference>
<dbReference type="EMBL" id="AF063686">
    <property type="protein sequence ID" value="AAD50327.1"/>
    <property type="status" value="JOINED"/>
    <property type="molecule type" value="Genomic_DNA"/>
</dbReference>
<dbReference type="EMBL" id="AF063687">
    <property type="protein sequence ID" value="AAD50327.1"/>
    <property type="status" value="JOINED"/>
    <property type="molecule type" value="Genomic_DNA"/>
</dbReference>
<dbReference type="EMBL" id="AF063688">
    <property type="protein sequence ID" value="AAD50327.1"/>
    <property type="status" value="JOINED"/>
    <property type="molecule type" value="Genomic_DNA"/>
</dbReference>
<dbReference type="EMBL" id="AF063689">
    <property type="protein sequence ID" value="AAD50327.1"/>
    <property type="status" value="JOINED"/>
    <property type="molecule type" value="Genomic_DNA"/>
</dbReference>
<dbReference type="EMBL" id="AF063690">
    <property type="protein sequence ID" value="AAD50327.1"/>
    <property type="status" value="JOINED"/>
    <property type="molecule type" value="Genomic_DNA"/>
</dbReference>
<dbReference type="EMBL" id="AF063691">
    <property type="protein sequence ID" value="AAD50327.1"/>
    <property type="status" value="JOINED"/>
    <property type="molecule type" value="Genomic_DNA"/>
</dbReference>
<dbReference type="EMBL" id="AF063692">
    <property type="protein sequence ID" value="AAD50327.1"/>
    <property type="status" value="JOINED"/>
    <property type="molecule type" value="Genomic_DNA"/>
</dbReference>
<dbReference type="CCDS" id="CCDS35918.1">
    <molecule id="Q9R1N9-2"/>
</dbReference>
<dbReference type="RefSeq" id="NP_031757.1">
    <molecule id="Q9R1N9-2"/>
    <property type="nucleotide sequence ID" value="NM_007731.3"/>
</dbReference>
<dbReference type="ComplexPortal" id="CPX-2980">
    <property type="entry name" value="Collagen type XIII trimer"/>
</dbReference>
<dbReference type="FunCoup" id="Q9R1N9">
    <property type="interactions" value="129"/>
</dbReference>
<dbReference type="STRING" id="10090.ENSMUSP00000101094"/>
<dbReference type="GlyCosmos" id="Q9R1N9">
    <property type="glycosylation" value="1 site, No reported glycans"/>
</dbReference>
<dbReference type="GlyGen" id="Q9R1N9">
    <property type="glycosylation" value="5 sites, 1 N-linked glycan (1 site)"/>
</dbReference>
<dbReference type="iPTMnet" id="Q9R1N9"/>
<dbReference type="PhosphoSitePlus" id="Q9R1N9"/>
<dbReference type="PaxDb" id="10090-ENSMUSP00000101094"/>
<dbReference type="ProteomicsDB" id="283599">
    <molecule id="Q9R1N9-1"/>
</dbReference>
<dbReference type="ProteomicsDB" id="283600">
    <molecule id="Q9R1N9-2"/>
</dbReference>
<dbReference type="Antibodypedia" id="28918">
    <property type="antibodies" value="98 antibodies from 26 providers"/>
</dbReference>
<dbReference type="DNASU" id="12817"/>
<dbReference type="Ensembl" id="ENSMUST00000105454.3">
    <molecule id="Q9R1N9-2"/>
    <property type="protein sequence ID" value="ENSMUSP00000101094.3"/>
    <property type="gene ID" value="ENSMUSG00000058806.16"/>
</dbReference>
<dbReference type="GeneID" id="12817"/>
<dbReference type="KEGG" id="mmu:12817"/>
<dbReference type="UCSC" id="uc007fgn.2">
    <molecule id="Q9R1N9-2"/>
    <property type="organism name" value="mouse"/>
</dbReference>
<dbReference type="AGR" id="MGI:1277201"/>
<dbReference type="CTD" id="1305"/>
<dbReference type="MGI" id="MGI:1277201">
    <property type="gene designation" value="Col13a1"/>
</dbReference>
<dbReference type="VEuPathDB" id="HostDB:ENSMUSG00000058806"/>
<dbReference type="eggNOG" id="KOG3544">
    <property type="taxonomic scope" value="Eukaryota"/>
</dbReference>
<dbReference type="GeneTree" id="ENSGT00940000154865"/>
<dbReference type="InParanoid" id="Q9R1N9"/>
<dbReference type="OMA" id="DKCSKFQ"/>
<dbReference type="PhylomeDB" id="Q9R1N9"/>
<dbReference type="TreeFam" id="TF338175"/>
<dbReference type="Reactome" id="R-MMU-1442490">
    <property type="pathway name" value="Collagen degradation"/>
</dbReference>
<dbReference type="Reactome" id="R-MMU-1650814">
    <property type="pathway name" value="Collagen biosynthesis and modifying enzymes"/>
</dbReference>
<dbReference type="Reactome" id="R-MMU-216083">
    <property type="pathway name" value="Integrin cell surface interactions"/>
</dbReference>
<dbReference type="Reactome" id="R-MMU-8948216">
    <property type="pathway name" value="Collagen chain trimerization"/>
</dbReference>
<dbReference type="BioGRID-ORCS" id="12817">
    <property type="hits" value="0 hits in 64 CRISPR screens"/>
</dbReference>
<dbReference type="PRO" id="PR:Q9R1N9"/>
<dbReference type="Proteomes" id="UP000000589">
    <property type="component" value="Chromosome 10"/>
</dbReference>
<dbReference type="RNAct" id="Q9R1N9">
    <property type="molecule type" value="protein"/>
</dbReference>
<dbReference type="Bgee" id="ENSMUSG00000058806">
    <property type="expression patterns" value="Expressed in Meckel's cartilage and 169 other cell types or tissues"/>
</dbReference>
<dbReference type="ExpressionAtlas" id="Q9R1N9">
    <property type="expression patterns" value="baseline and differential"/>
</dbReference>
<dbReference type="GO" id="GO:0005911">
    <property type="term" value="C:cell-cell junction"/>
    <property type="evidence" value="ECO:0000314"/>
    <property type="project" value="MGI"/>
</dbReference>
<dbReference type="GO" id="GO:0005581">
    <property type="term" value="C:collagen trimer"/>
    <property type="evidence" value="ECO:0007669"/>
    <property type="project" value="UniProtKB-KW"/>
</dbReference>
<dbReference type="GO" id="GO:0062023">
    <property type="term" value="C:collagen-containing extracellular matrix"/>
    <property type="evidence" value="ECO:0007005"/>
    <property type="project" value="BHF-UCL"/>
</dbReference>
<dbReference type="GO" id="GO:0045211">
    <property type="term" value="C:postsynaptic membrane"/>
    <property type="evidence" value="ECO:0007669"/>
    <property type="project" value="UniProtKB-SubCell"/>
</dbReference>
<dbReference type="GO" id="GO:0008201">
    <property type="term" value="F:heparin binding"/>
    <property type="evidence" value="ECO:0007669"/>
    <property type="project" value="UniProtKB-KW"/>
</dbReference>
<dbReference type="GO" id="GO:0030154">
    <property type="term" value="P:cell differentiation"/>
    <property type="evidence" value="ECO:0007669"/>
    <property type="project" value="UniProtKB-KW"/>
</dbReference>
<dbReference type="GO" id="GO:0098609">
    <property type="term" value="P:cell-cell adhesion"/>
    <property type="evidence" value="ECO:0000250"/>
    <property type="project" value="UniProtKB"/>
</dbReference>
<dbReference type="GO" id="GO:0007160">
    <property type="term" value="P:cell-matrix adhesion"/>
    <property type="evidence" value="ECO:0000250"/>
    <property type="project" value="UniProtKB"/>
</dbReference>
<dbReference type="GO" id="GO:0001958">
    <property type="term" value="P:endochondral ossification"/>
    <property type="evidence" value="ECO:0000270"/>
    <property type="project" value="UniProtKB"/>
</dbReference>
<dbReference type="GO" id="GO:0001763">
    <property type="term" value="P:morphogenesis of a branching structure"/>
    <property type="evidence" value="ECO:0000270"/>
    <property type="project" value="UniProtKB"/>
</dbReference>
<dbReference type="InterPro" id="IPR008160">
    <property type="entry name" value="Collagen"/>
</dbReference>
<dbReference type="InterPro" id="IPR050938">
    <property type="entry name" value="Collagen_Structural_Proteins"/>
</dbReference>
<dbReference type="PANTHER" id="PTHR37456:SF5">
    <property type="entry name" value="COLLAGEN TYPE XIII ALPHA 1 CHAIN"/>
    <property type="match status" value="1"/>
</dbReference>
<dbReference type="PANTHER" id="PTHR37456">
    <property type="entry name" value="SI:CH211-266K2.1"/>
    <property type="match status" value="1"/>
</dbReference>
<dbReference type="Pfam" id="PF01391">
    <property type="entry name" value="Collagen"/>
    <property type="match status" value="9"/>
</dbReference>
<evidence type="ECO:0000250" key="1"/>
<evidence type="ECO:0000250" key="2">
    <source>
        <dbReference type="UniProtKB" id="Q5TAT6"/>
    </source>
</evidence>
<evidence type="ECO:0000255" key="3"/>
<evidence type="ECO:0000256" key="4">
    <source>
        <dbReference type="SAM" id="MobiDB-lite"/>
    </source>
</evidence>
<evidence type="ECO:0000269" key="5">
    <source>
    </source>
</evidence>
<evidence type="ECO:0000269" key="6">
    <source>
    </source>
</evidence>
<evidence type="ECO:0000269" key="7">
    <source>
    </source>
</evidence>
<evidence type="ECO:0000269" key="8">
    <source>
    </source>
</evidence>
<evidence type="ECO:0000269" key="9">
    <source>
    </source>
</evidence>
<evidence type="ECO:0000269" key="10">
    <source>
    </source>
</evidence>
<evidence type="ECO:0000269" key="11">
    <source>
    </source>
</evidence>
<evidence type="ECO:0000303" key="12">
    <source>
    </source>
</evidence>
<evidence type="ECO:0000305" key="13"/>
<evidence type="ECO:0000312" key="14">
    <source>
        <dbReference type="EMBL" id="AAC24314.1"/>
    </source>
</evidence>
<evidence type="ECO:0000312" key="15">
    <source>
        <dbReference type="EMBL" id="AAD50327.1"/>
    </source>
</evidence>
<evidence type="ECO:0000312" key="16">
    <source>
        <dbReference type="MGI" id="MGI:1277201"/>
    </source>
</evidence>
<proteinExistence type="evidence at transcript level"/>
<protein>
    <recommendedName>
        <fullName>Collagen alpha-1(XIII) chain</fullName>
    </recommendedName>
</protein>
<reference evidence="13 14" key="1">
    <citation type="journal article" date="1998" name="J. Biol. Chem.">
        <title>Type XIII collagen is identified as a plasma membrane protein.</title>
        <authorList>
            <person name="Hagg P."/>
            <person name="Rehn M."/>
            <person name="Huhtala P."/>
            <person name="Vaisanen T."/>
            <person name="Tamminen M."/>
            <person name="Pihlajaniemi T."/>
        </authorList>
    </citation>
    <scope>NUCLEOTIDE SEQUENCE [MRNA] (ISOFORM 2)</scope>
    <scope>SUBCELLULAR LOCATION</scope>
    <source>
        <tissue>Intestine</tissue>
    </source>
</reference>
<reference evidence="13 15" key="2">
    <citation type="journal article" date="1999" name="Matrix Biol.">
        <title>Complete exon-intron organization and chromosomal location of the gene for mouse type XIII collagen (col13a1) and comparison with its human homologue.</title>
        <authorList>
            <person name="Kvist A.-P."/>
            <person name="Latvanlehto A."/>
            <person name="Sund M."/>
            <person name="Horelli-Kuitunen N."/>
            <person name="Rehn M."/>
            <person name="Palotie A."/>
            <person name="Beier D."/>
            <person name="Pihlajaniemi T."/>
        </authorList>
    </citation>
    <scope>NUCLEOTIDE SEQUENCE [GENOMIC DNA]</scope>
    <scope>ALTERNATIVE SPLICING (ISOFORM 1)</scope>
</reference>
<reference evidence="13" key="3">
    <citation type="journal article" date="2001" name="Am. J. Pathol.">
        <title>Lack of cytosolic and transmembrane domains of type XIII collagen results in progressive myopathy.</title>
        <authorList>
            <person name="Kvist A.-P."/>
            <person name="Latvanlehto A."/>
            <person name="Sund M."/>
            <person name="Eklund L."/>
            <person name="Vaisanen T."/>
            <person name="Hagg P."/>
            <person name="Sormunen R."/>
            <person name="Komulainen J."/>
            <person name="Fassler R."/>
            <person name="Pihlajaniemi T."/>
        </authorList>
    </citation>
    <scope>FUNCTION</scope>
    <scope>TRANSGENIC MICE</scope>
</reference>
<reference evidence="13" key="4">
    <citation type="journal article" date="2001" name="EMBO J.">
        <title>Abnormal adherence junctions in the heart and reduced angiogenesis in transgenic mice overexpressing mutant type XIII collagen.</title>
        <authorList>
            <person name="Sund M."/>
            <person name="Ylonen R."/>
            <person name="Tuomisto A."/>
            <person name="Sormunen R."/>
            <person name="Tahkola J."/>
            <person name="Kvist A.-P."/>
            <person name="Kontusaari S."/>
            <person name="Autio-Harmainen H."/>
            <person name="Pihlajaniemi T."/>
        </authorList>
    </citation>
    <scope>FUNCTION</scope>
    <scope>TRANSGENIC MICE</scope>
</reference>
<reference evidence="13" key="5">
    <citation type="journal article" date="2001" name="Matrix Biol.">
        <title>Distinct expression of type XIII collagen in neuronal structures and other tissues during mouse development.</title>
        <authorList>
            <person name="Sund M."/>
            <person name="Vaisanen T."/>
            <person name="Kaukinen S."/>
            <person name="Ilves M."/>
            <person name="Tu H."/>
            <person name="Autio-Harmainen H."/>
            <person name="Rauvala H."/>
            <person name="Pihlajaniemi T."/>
        </authorList>
    </citation>
    <scope>DEVELOPMENTAL STAGE</scope>
</reference>
<reference evidence="13" key="6">
    <citation type="journal article" date="2005" name="J. Bone Miner. Res.">
        <title>Type XIII collagen strongly affects bone formation in transgenic mice.</title>
        <authorList>
            <person name="Ylonen R."/>
            <person name="Kyronlahti T."/>
            <person name="Sund M."/>
            <person name="Ilves M."/>
            <person name="Lehenkari P."/>
            <person name="Tuukkanen J."/>
            <person name="Pihlajaniemi T."/>
        </authorList>
    </citation>
    <scope>FUNCTION</scope>
</reference>
<reference key="7">
    <citation type="journal article" date="2015" name="Am. J. Hum. Genet.">
        <title>Congenital myasthenic syndrome type 19 is caused by mutations in COL13A1, Encoding the atypical non-fibrillar collagen type XIII alpha1 chain.</title>
        <authorList>
            <person name="Logan C.V."/>
            <person name="Cossins J."/>
            <person name="Rodriguez Cruz P.M."/>
            <person name="Parry D.A."/>
            <person name="Maxwell S."/>
            <person name="Martinez-Martinez P."/>
            <person name="Riepsaame J."/>
            <person name="Abdelhamed Z.A."/>
            <person name="Lake A.V."/>
            <person name="Moran M."/>
            <person name="Robb S."/>
            <person name="Chow G."/>
            <person name="Sewry C."/>
            <person name="Hopkins P.M."/>
            <person name="Sheridan E."/>
            <person name="Jayawant S."/>
            <person name="Palace J."/>
            <person name="Johnson C.A."/>
            <person name="Beeson D."/>
        </authorList>
    </citation>
    <scope>FUNCTION</scope>
</reference>